<accession>P84559</accession>
<keyword id="KW-0066">ATP synthesis</keyword>
<keyword id="KW-0139">CF(1)</keyword>
<keyword id="KW-0150">Chloroplast</keyword>
<keyword id="KW-0903">Direct protein sequencing</keyword>
<keyword id="KW-0375">Hydrogen ion transport</keyword>
<keyword id="KW-0406">Ion transport</keyword>
<keyword id="KW-0472">Membrane</keyword>
<keyword id="KW-0934">Plastid</keyword>
<keyword id="KW-1185">Reference proteome</keyword>
<keyword id="KW-0793">Thylakoid</keyword>
<keyword id="KW-0813">Transport</keyword>
<feature type="chain" id="PRO_0000188287" description="ATP synthase epsilon chain, chloroplastic">
    <location>
        <begin position="1" status="less than"/>
        <end position="11" status="greater than"/>
    </location>
</feature>
<feature type="non-terminal residue">
    <location>
        <position position="1"/>
    </location>
</feature>
<feature type="non-terminal residue">
    <location>
        <position position="11"/>
    </location>
</feature>
<protein>
    <recommendedName>
        <fullName>ATP synthase epsilon chain, chloroplastic</fullName>
    </recommendedName>
    <alternativeName>
        <fullName>ATP synthase F1 sector epsilon subunit</fullName>
    </alternativeName>
    <alternativeName>
        <fullName>F-ATPase epsilon subunit</fullName>
    </alternativeName>
</protein>
<proteinExistence type="evidence at protein level"/>
<comment type="function">
    <text evidence="1">Produces ATP from ADP in the presence of a proton gradient across the membrane.</text>
</comment>
<comment type="subunit">
    <text evidence="1">F-type ATPases have 2 components, CF(1) - the catalytic core - and CF(0) - the membrane proton channel. CF(1) has five subunits: alpha(3), beta(3), gamma(1), delta(1), epsilon(1). CF(0) has three main subunits: a, b and c (By similarity).</text>
</comment>
<comment type="subcellular location">
    <subcellularLocation>
        <location evidence="1">Plastid</location>
        <location evidence="1">Chloroplast thylakoid membrane</location>
        <topology evidence="1">Peripheral membrane protein</topology>
    </subcellularLocation>
</comment>
<comment type="similarity">
    <text evidence="2">Belongs to the ATPase epsilon chain family.</text>
</comment>
<geneLocation type="chloroplast"/>
<gene>
    <name type="primary">atpE</name>
</gene>
<dbReference type="Proteomes" id="UP000694918">
    <property type="component" value="Unplaced"/>
</dbReference>
<dbReference type="GO" id="GO:0009535">
    <property type="term" value="C:chloroplast thylakoid membrane"/>
    <property type="evidence" value="ECO:0007669"/>
    <property type="project" value="UniProtKB-SubCell"/>
</dbReference>
<dbReference type="GO" id="GO:0045259">
    <property type="term" value="C:proton-transporting ATP synthase complex"/>
    <property type="evidence" value="ECO:0007669"/>
    <property type="project" value="UniProtKB-KW"/>
</dbReference>
<dbReference type="GO" id="GO:0006754">
    <property type="term" value="P:ATP biosynthetic process"/>
    <property type="evidence" value="ECO:0007669"/>
    <property type="project" value="UniProtKB-KW"/>
</dbReference>
<dbReference type="GO" id="GO:1902600">
    <property type="term" value="P:proton transmembrane transport"/>
    <property type="evidence" value="ECO:0007669"/>
    <property type="project" value="UniProtKB-KW"/>
</dbReference>
<organism>
    <name type="scientific">Populus euphratica</name>
    <name type="common">Euphrates poplar</name>
    <dbReference type="NCBI Taxonomy" id="75702"/>
    <lineage>
        <taxon>Eukaryota</taxon>
        <taxon>Viridiplantae</taxon>
        <taxon>Streptophyta</taxon>
        <taxon>Embryophyta</taxon>
        <taxon>Tracheophyta</taxon>
        <taxon>Spermatophyta</taxon>
        <taxon>Magnoliopsida</taxon>
        <taxon>eudicotyledons</taxon>
        <taxon>Gunneridae</taxon>
        <taxon>Pentapetalae</taxon>
        <taxon>rosids</taxon>
        <taxon>fabids</taxon>
        <taxon>Malpighiales</taxon>
        <taxon>Salicaceae</taxon>
        <taxon>Saliceae</taxon>
        <taxon>Populus</taxon>
    </lineage>
</organism>
<name>ATPE_POPEU</name>
<reference key="1">
    <citation type="journal article" date="2006" name="Ann. Bot.">
        <title>Proteome profiling of Populus euphratica Oliv. upon heat stress.</title>
        <authorList>
            <person name="Ferreira S."/>
            <person name="Hjernoe K."/>
            <person name="Larsen M."/>
            <person name="Wingsle G."/>
            <person name="Larsen P."/>
            <person name="Fey S."/>
            <person name="Roepstorff P."/>
            <person name="Pais M.S."/>
        </authorList>
    </citation>
    <scope>PROTEIN SEQUENCE</scope>
    <source>
        <tissue>Leaf</tissue>
    </source>
</reference>
<evidence type="ECO:0000250" key="1"/>
<evidence type="ECO:0000305" key="2"/>
<sequence length="11" mass="1297">QIIEANLALRR</sequence>